<accession>Q5LV46</accession>
<keyword id="KW-0119">Carbohydrate metabolism</keyword>
<keyword id="KW-0963">Cytoplasm</keyword>
<keyword id="KW-0413">Isomerase</keyword>
<keyword id="KW-0460">Magnesium</keyword>
<keyword id="KW-0479">Metal-binding</keyword>
<keyword id="KW-1185">Reference proteome</keyword>
<keyword id="KW-0859">Xylose metabolism</keyword>
<sequence>MTEFFADIAPVRYEGPDSANPLAFRHYDPDEMVMGKRMEDHLRFAVAYWHSFAWEGGDPFGGQTLIRPWHPQDDMTRAKVKADAAFEMFDILGVPYFCWHDADIRPEAATFAESLRNFEEIIDHFLAKMESRRTRLLWGTANMFSHRRWMAGASTNPDPDVFAYAAATVKTCLDATQRMGGQNYVLWGGREGYETLLNTDMGRELDHMGRFLSMVVDYKHKIGFKGAILVEPKPQEPSKHQYDFDAATCIGFLRKYGLEGEVKLNLEQGHAILAGHSFEHEIAVAASEGMLGSIDMNRNDYQSGWDTDQFPNNVPEVALCYYHILRAGGFTTGGTNFDAKLRRQSLDATDLIAAHVGGMDICARGLKAAAAMIEDGGLETALRDRYAGWDSDHGQGILESDLDSLFARVLAGEIDPQPHSGRQEMLENHVNRFV</sequence>
<organism>
    <name type="scientific">Ruegeria pomeroyi (strain ATCC 700808 / DSM 15171 / DSS-3)</name>
    <name type="common">Silicibacter pomeroyi</name>
    <dbReference type="NCBI Taxonomy" id="246200"/>
    <lineage>
        <taxon>Bacteria</taxon>
        <taxon>Pseudomonadati</taxon>
        <taxon>Pseudomonadota</taxon>
        <taxon>Alphaproteobacteria</taxon>
        <taxon>Rhodobacterales</taxon>
        <taxon>Roseobacteraceae</taxon>
        <taxon>Ruegeria</taxon>
    </lineage>
</organism>
<evidence type="ECO:0000255" key="1">
    <source>
        <dbReference type="HAMAP-Rule" id="MF_00455"/>
    </source>
</evidence>
<name>XYLA_RUEPO</name>
<protein>
    <recommendedName>
        <fullName evidence="1">Xylose isomerase</fullName>
        <ecNumber evidence="1">5.3.1.5</ecNumber>
    </recommendedName>
</protein>
<dbReference type="EC" id="5.3.1.5" evidence="1"/>
<dbReference type="EMBL" id="CP000031">
    <property type="protein sequence ID" value="AAV94161.1"/>
    <property type="molecule type" value="Genomic_DNA"/>
</dbReference>
<dbReference type="RefSeq" id="WP_011046605.1">
    <property type="nucleotide sequence ID" value="NC_003911.12"/>
</dbReference>
<dbReference type="SMR" id="Q5LV46"/>
<dbReference type="STRING" id="246200.SPO0856"/>
<dbReference type="PaxDb" id="246200-SPO0856"/>
<dbReference type="KEGG" id="sil:SPO0856"/>
<dbReference type="eggNOG" id="COG2115">
    <property type="taxonomic scope" value="Bacteria"/>
</dbReference>
<dbReference type="HOGENOM" id="CLU_037261_1_0_5"/>
<dbReference type="OrthoDB" id="9763981at2"/>
<dbReference type="Proteomes" id="UP000001023">
    <property type="component" value="Chromosome"/>
</dbReference>
<dbReference type="GO" id="GO:0005737">
    <property type="term" value="C:cytoplasm"/>
    <property type="evidence" value="ECO:0007669"/>
    <property type="project" value="UniProtKB-SubCell"/>
</dbReference>
<dbReference type="GO" id="GO:0000287">
    <property type="term" value="F:magnesium ion binding"/>
    <property type="evidence" value="ECO:0007669"/>
    <property type="project" value="UniProtKB-UniRule"/>
</dbReference>
<dbReference type="GO" id="GO:0009045">
    <property type="term" value="F:xylose isomerase activity"/>
    <property type="evidence" value="ECO:0007669"/>
    <property type="project" value="UniProtKB-UniRule"/>
</dbReference>
<dbReference type="GO" id="GO:0042732">
    <property type="term" value="P:D-xylose metabolic process"/>
    <property type="evidence" value="ECO:0007669"/>
    <property type="project" value="UniProtKB-UniRule"/>
</dbReference>
<dbReference type="Gene3D" id="3.20.20.150">
    <property type="entry name" value="Divalent-metal-dependent TIM barrel enzymes"/>
    <property type="match status" value="1"/>
</dbReference>
<dbReference type="HAMAP" id="MF_00455">
    <property type="entry name" value="Xylose_isom_A"/>
    <property type="match status" value="1"/>
</dbReference>
<dbReference type="InterPro" id="IPR036237">
    <property type="entry name" value="Xyl_isomerase-like_sf"/>
</dbReference>
<dbReference type="InterPro" id="IPR013452">
    <property type="entry name" value="Xylose_isom_bac"/>
</dbReference>
<dbReference type="InterPro" id="IPR001998">
    <property type="entry name" value="Xylose_isomerase"/>
</dbReference>
<dbReference type="NCBIfam" id="NF003998">
    <property type="entry name" value="PRK05474.1"/>
    <property type="match status" value="1"/>
</dbReference>
<dbReference type="NCBIfam" id="TIGR02630">
    <property type="entry name" value="xylose_isom_A"/>
    <property type="match status" value="1"/>
</dbReference>
<dbReference type="PANTHER" id="PTHR48408">
    <property type="match status" value="1"/>
</dbReference>
<dbReference type="PANTHER" id="PTHR48408:SF1">
    <property type="entry name" value="XYLOSE ISOMERASE"/>
    <property type="match status" value="1"/>
</dbReference>
<dbReference type="PRINTS" id="PR00688">
    <property type="entry name" value="XYLOSISMRASE"/>
</dbReference>
<dbReference type="SUPFAM" id="SSF51658">
    <property type="entry name" value="Xylose isomerase-like"/>
    <property type="match status" value="1"/>
</dbReference>
<dbReference type="PROSITE" id="PS51415">
    <property type="entry name" value="XYLOSE_ISOMERASE"/>
    <property type="match status" value="1"/>
</dbReference>
<comment type="catalytic activity">
    <reaction evidence="1">
        <text>alpha-D-xylose = alpha-D-xylulofuranose</text>
        <dbReference type="Rhea" id="RHEA:22816"/>
        <dbReference type="ChEBI" id="CHEBI:28518"/>
        <dbReference type="ChEBI" id="CHEBI:188998"/>
        <dbReference type="EC" id="5.3.1.5"/>
    </reaction>
</comment>
<comment type="cofactor">
    <cofactor evidence="1">
        <name>Mg(2+)</name>
        <dbReference type="ChEBI" id="CHEBI:18420"/>
    </cofactor>
    <text evidence="1">Binds 2 magnesium ions per subunit.</text>
</comment>
<comment type="subunit">
    <text evidence="1">Homotetramer.</text>
</comment>
<comment type="subcellular location">
    <subcellularLocation>
        <location evidence="1">Cytoplasm</location>
    </subcellularLocation>
</comment>
<comment type="similarity">
    <text evidence="1">Belongs to the xylose isomerase family.</text>
</comment>
<reference key="1">
    <citation type="journal article" date="2004" name="Nature">
        <title>Genome sequence of Silicibacter pomeroyi reveals adaptations to the marine environment.</title>
        <authorList>
            <person name="Moran M.A."/>
            <person name="Buchan A."/>
            <person name="Gonzalez J.M."/>
            <person name="Heidelberg J.F."/>
            <person name="Whitman W.B."/>
            <person name="Kiene R.P."/>
            <person name="Henriksen J.R."/>
            <person name="King G.M."/>
            <person name="Belas R."/>
            <person name="Fuqua C."/>
            <person name="Brinkac L.M."/>
            <person name="Lewis M."/>
            <person name="Johri S."/>
            <person name="Weaver B."/>
            <person name="Pai G."/>
            <person name="Eisen J.A."/>
            <person name="Rahe E."/>
            <person name="Sheldon W.M."/>
            <person name="Ye W."/>
            <person name="Miller T.R."/>
            <person name="Carlton J."/>
            <person name="Rasko D.A."/>
            <person name="Paulsen I.T."/>
            <person name="Ren Q."/>
            <person name="Daugherty S.C."/>
            <person name="DeBoy R.T."/>
            <person name="Dodson R.J."/>
            <person name="Durkin A.S."/>
            <person name="Madupu R."/>
            <person name="Nelson W.C."/>
            <person name="Sullivan S.A."/>
            <person name="Rosovitz M.J."/>
            <person name="Haft D.H."/>
            <person name="Selengut J."/>
            <person name="Ward N."/>
        </authorList>
    </citation>
    <scope>NUCLEOTIDE SEQUENCE [LARGE SCALE GENOMIC DNA]</scope>
    <source>
        <strain>ATCC 700808 / DSM 15171 / DSS-3</strain>
    </source>
</reference>
<reference key="2">
    <citation type="journal article" date="2014" name="Stand. Genomic Sci.">
        <title>An updated genome annotation for the model marine bacterium Ruegeria pomeroyi DSS-3.</title>
        <authorList>
            <person name="Rivers A.R."/>
            <person name="Smith C.B."/>
            <person name="Moran M.A."/>
        </authorList>
    </citation>
    <scope>GENOME REANNOTATION</scope>
    <source>
        <strain>ATCC 700808 / DSM 15171 / DSS-3</strain>
    </source>
</reference>
<proteinExistence type="inferred from homology"/>
<gene>
    <name evidence="1" type="primary">xylA</name>
    <name type="ordered locus">SPO0856</name>
</gene>
<feature type="chain" id="PRO_0000236974" description="Xylose isomerase">
    <location>
        <begin position="1"/>
        <end position="434"/>
    </location>
</feature>
<feature type="active site" evidence="1">
    <location>
        <position position="100"/>
    </location>
</feature>
<feature type="active site" evidence="1">
    <location>
        <position position="103"/>
    </location>
</feature>
<feature type="binding site" evidence="1">
    <location>
        <position position="231"/>
    </location>
    <ligand>
        <name>Mg(2+)</name>
        <dbReference type="ChEBI" id="CHEBI:18420"/>
        <label>1</label>
    </ligand>
</feature>
<feature type="binding site" evidence="1">
    <location>
        <position position="267"/>
    </location>
    <ligand>
        <name>Mg(2+)</name>
        <dbReference type="ChEBI" id="CHEBI:18420"/>
        <label>1</label>
    </ligand>
</feature>
<feature type="binding site" evidence="1">
    <location>
        <position position="267"/>
    </location>
    <ligand>
        <name>Mg(2+)</name>
        <dbReference type="ChEBI" id="CHEBI:18420"/>
        <label>2</label>
    </ligand>
</feature>
<feature type="binding site" evidence="1">
    <location>
        <position position="270"/>
    </location>
    <ligand>
        <name>Mg(2+)</name>
        <dbReference type="ChEBI" id="CHEBI:18420"/>
        <label>2</label>
    </ligand>
</feature>
<feature type="binding site" evidence="1">
    <location>
        <position position="295"/>
    </location>
    <ligand>
        <name>Mg(2+)</name>
        <dbReference type="ChEBI" id="CHEBI:18420"/>
        <label>1</label>
    </ligand>
</feature>
<feature type="binding site" evidence="1">
    <location>
        <position position="306"/>
    </location>
    <ligand>
        <name>Mg(2+)</name>
        <dbReference type="ChEBI" id="CHEBI:18420"/>
        <label>2</label>
    </ligand>
</feature>
<feature type="binding site" evidence="1">
    <location>
        <position position="308"/>
    </location>
    <ligand>
        <name>Mg(2+)</name>
        <dbReference type="ChEBI" id="CHEBI:18420"/>
        <label>2</label>
    </ligand>
</feature>
<feature type="binding site" evidence="1">
    <location>
        <position position="338"/>
    </location>
    <ligand>
        <name>Mg(2+)</name>
        <dbReference type="ChEBI" id="CHEBI:18420"/>
        <label>1</label>
    </ligand>
</feature>